<sequence length="305" mass="34877">MGTSGIEIFAALNDFTDAIVSVPESVCGKFTSLKEIDAQVRDIRQNVIQEIGVVLKNEKNDELSGEERCERLQKTLKEILPYSDSKICLATDAMNNIKSCIDRLDAGFEYVELEIPQQLRLGYPDDRALMNYHSTVTPQTSERRRETRRHQNNQHSQQYSSQERSSSYNNFEDASSPQSSYHTPTKRRKNAVPRKSSSPPLSSTKHAPQSTERRPVRRSESRLKQTNGEPLVKHDTLDSSDISREGEQLYCYCQQVSYGQMIGCDNENCKREWFHLPCVGLVEPPKGIWYCKECEELAKSSESRQ</sequence>
<feature type="chain" id="PRO_0000362155" description="Chromatin modification-related protein png2">
    <location>
        <begin position="1"/>
        <end position="305"/>
    </location>
</feature>
<feature type="zinc finger region" description="PHD-type" evidence="3">
    <location>
        <begin position="248"/>
        <end position="297"/>
    </location>
</feature>
<feature type="region of interest" description="Disordered" evidence="4">
    <location>
        <begin position="135"/>
        <end position="239"/>
    </location>
</feature>
<feature type="compositionally biased region" description="Low complexity" evidence="4">
    <location>
        <begin position="153"/>
        <end position="167"/>
    </location>
</feature>
<feature type="compositionally biased region" description="Polar residues" evidence="4">
    <location>
        <begin position="168"/>
        <end position="183"/>
    </location>
</feature>
<feature type="compositionally biased region" description="Polar residues" evidence="4">
    <location>
        <begin position="195"/>
        <end position="210"/>
    </location>
</feature>
<feature type="compositionally biased region" description="Basic and acidic residues" evidence="4">
    <location>
        <begin position="211"/>
        <end position="223"/>
    </location>
</feature>
<feature type="binding site" evidence="2">
    <location>
        <position position="251"/>
    </location>
    <ligand>
        <name>Zn(2+)</name>
        <dbReference type="ChEBI" id="CHEBI:29105"/>
        <label>1</label>
    </ligand>
</feature>
<feature type="binding site" evidence="2">
    <location>
        <position position="253"/>
    </location>
    <ligand>
        <name>Zn(2+)</name>
        <dbReference type="ChEBI" id="CHEBI:29105"/>
        <label>1</label>
    </ligand>
</feature>
<feature type="binding site" evidence="2">
    <location>
        <position position="264"/>
    </location>
    <ligand>
        <name>Zn(2+)</name>
        <dbReference type="ChEBI" id="CHEBI:29105"/>
        <label>2</label>
    </ligand>
</feature>
<feature type="binding site" evidence="2">
    <location>
        <position position="269"/>
    </location>
    <ligand>
        <name>Zn(2+)</name>
        <dbReference type="ChEBI" id="CHEBI:29105"/>
        <label>2</label>
    </ligand>
</feature>
<feature type="binding site" evidence="2">
    <location>
        <position position="275"/>
    </location>
    <ligand>
        <name>Zn(2+)</name>
        <dbReference type="ChEBI" id="CHEBI:29105"/>
        <label>1</label>
    </ligand>
</feature>
<feature type="binding site" evidence="2">
    <location>
        <position position="278"/>
    </location>
    <ligand>
        <name>Zn(2+)</name>
        <dbReference type="ChEBI" id="CHEBI:29105"/>
        <label>1</label>
    </ligand>
</feature>
<feature type="binding site" evidence="2">
    <location>
        <position position="291"/>
    </location>
    <ligand>
        <name>Zn(2+)</name>
        <dbReference type="ChEBI" id="CHEBI:29105"/>
        <label>2</label>
    </ligand>
</feature>
<feature type="binding site" evidence="2">
    <location>
        <position position="294"/>
    </location>
    <ligand>
        <name>Zn(2+)</name>
        <dbReference type="ChEBI" id="CHEBI:29105"/>
        <label>2</label>
    </ligand>
</feature>
<feature type="site" description="Histone H3K4me3 binding" evidence="2">
    <location>
        <position position="250"/>
    </location>
</feature>
<feature type="site" description="Histone H3K4me3 binding" evidence="2">
    <location>
        <position position="261"/>
    </location>
</feature>
<feature type="site" description="Histone H3K4me3 binding" evidence="2">
    <location>
        <position position="265"/>
    </location>
</feature>
<feature type="site" description="Histone H3K4me3 binding" evidence="2">
    <location>
        <position position="273"/>
    </location>
</feature>
<feature type="modified residue" description="Phosphotyrosine" evidence="8">
    <location>
        <position position="181"/>
    </location>
</feature>
<feature type="modified residue" description="Phosphothreonine" evidence="8">
    <location>
        <position position="183"/>
    </location>
</feature>
<feature type="modified residue" description="Phosphoserine" evidence="8">
    <location>
        <position position="197"/>
    </location>
</feature>
<feature type="modified residue" description="Phosphoserine" evidence="8">
    <location>
        <position position="198"/>
    </location>
</feature>
<feature type="helix" evidence="10">
    <location>
        <begin position="10"/>
        <end position="21"/>
    </location>
</feature>
<feature type="helix" evidence="10">
    <location>
        <begin position="23"/>
        <end position="38"/>
    </location>
</feature>
<feature type="helix" evidence="10">
    <location>
        <begin position="41"/>
        <end position="56"/>
    </location>
</feature>
<feature type="strand" evidence="10">
    <location>
        <begin position="57"/>
        <end position="60"/>
    </location>
</feature>
<feature type="helix" evidence="10">
    <location>
        <begin position="65"/>
        <end position="111"/>
    </location>
</feature>
<feature type="helix" evidence="10">
    <location>
        <begin position="117"/>
        <end position="119"/>
    </location>
</feature>
<dbReference type="EMBL" id="CU329671">
    <property type="protein sequence ID" value="CAA21250.1"/>
    <property type="molecule type" value="Genomic_DNA"/>
</dbReference>
<dbReference type="PIR" id="T39639">
    <property type="entry name" value="T39639"/>
</dbReference>
<dbReference type="RefSeq" id="NP_595444.1">
    <property type="nucleotide sequence ID" value="NM_001021353.2"/>
</dbReference>
<dbReference type="PDB" id="8I03">
    <property type="method" value="EM"/>
    <property type="resolution" value="3.20 A"/>
    <property type="chains" value="H=1-305"/>
</dbReference>
<dbReference type="PDBsum" id="8I03"/>
<dbReference type="EMDB" id="EMD-35093"/>
<dbReference type="SMR" id="O74736"/>
<dbReference type="BioGRID" id="276497">
    <property type="interactions" value="102"/>
</dbReference>
<dbReference type="ComplexPortal" id="CPX-9129">
    <property type="entry name" value="RPD3L histone deacetylase complex"/>
</dbReference>
<dbReference type="DIP" id="DIP-29344N"/>
<dbReference type="FunCoup" id="O74736">
    <property type="interactions" value="159"/>
</dbReference>
<dbReference type="IntAct" id="O74736">
    <property type="interactions" value="4"/>
</dbReference>
<dbReference type="STRING" id="284812.O74736"/>
<dbReference type="iPTMnet" id="O74736"/>
<dbReference type="PaxDb" id="4896-SPBC1709.11c.1"/>
<dbReference type="EnsemblFungi" id="SPBC1709.11c.1">
    <property type="protein sequence ID" value="SPBC1709.11c.1:pep"/>
    <property type="gene ID" value="SPBC1709.11c"/>
</dbReference>
<dbReference type="PomBase" id="SPBC1709.11c">
    <property type="gene designation" value="png2"/>
</dbReference>
<dbReference type="VEuPathDB" id="FungiDB:SPBC1709.11c"/>
<dbReference type="eggNOG" id="KOG1973">
    <property type="taxonomic scope" value="Eukaryota"/>
</dbReference>
<dbReference type="HOGENOM" id="CLU_031900_2_1_1"/>
<dbReference type="InParanoid" id="O74736"/>
<dbReference type="OMA" id="HEIDAKC"/>
<dbReference type="PhylomeDB" id="O74736"/>
<dbReference type="Reactome" id="R-SPO-3214847">
    <property type="pathway name" value="HATs acetylate histones"/>
</dbReference>
<dbReference type="Reactome" id="R-SPO-3899300">
    <property type="pathway name" value="SUMOylation of transcription cofactors"/>
</dbReference>
<dbReference type="Reactome" id="R-SPO-6804758">
    <property type="pathway name" value="Regulation of TP53 Activity through Acetylation"/>
</dbReference>
<dbReference type="Reactome" id="R-SPO-6811555">
    <property type="pathway name" value="PI5P Regulates TP53 Acetylation"/>
</dbReference>
<dbReference type="PRO" id="PR:O74736"/>
<dbReference type="Proteomes" id="UP000002485">
    <property type="component" value="Chromosome II"/>
</dbReference>
<dbReference type="GO" id="GO:0005829">
    <property type="term" value="C:cytosol"/>
    <property type="evidence" value="ECO:0007005"/>
    <property type="project" value="PomBase"/>
</dbReference>
<dbReference type="GO" id="GO:0035267">
    <property type="term" value="C:NuA4 histone acetyltransferase complex"/>
    <property type="evidence" value="ECO:0000266"/>
    <property type="project" value="PomBase"/>
</dbReference>
<dbReference type="GO" id="GO:0005634">
    <property type="term" value="C:nucleus"/>
    <property type="evidence" value="ECO:0007005"/>
    <property type="project" value="PomBase"/>
</dbReference>
<dbReference type="GO" id="GO:0033698">
    <property type="term" value="C:Rpd3L complex"/>
    <property type="evidence" value="ECO:0000314"/>
    <property type="project" value="PomBase"/>
</dbReference>
<dbReference type="GO" id="GO:0070210">
    <property type="term" value="C:Rpd3L-Expanded complex"/>
    <property type="evidence" value="ECO:0000314"/>
    <property type="project" value="PomBase"/>
</dbReference>
<dbReference type="GO" id="GO:0035064">
    <property type="term" value="F:methylated histone binding"/>
    <property type="evidence" value="ECO:0000318"/>
    <property type="project" value="GO_Central"/>
</dbReference>
<dbReference type="GO" id="GO:0008270">
    <property type="term" value="F:zinc ion binding"/>
    <property type="evidence" value="ECO:0007669"/>
    <property type="project" value="UniProtKB-KW"/>
</dbReference>
<dbReference type="GO" id="GO:0140861">
    <property type="term" value="P:DNA repair-dependent chromatin remodeling"/>
    <property type="evidence" value="ECO:0000305"/>
    <property type="project" value="PomBase"/>
</dbReference>
<dbReference type="GO" id="GO:0006355">
    <property type="term" value="P:regulation of DNA-templated transcription"/>
    <property type="evidence" value="ECO:0000318"/>
    <property type="project" value="GO_Central"/>
</dbReference>
<dbReference type="CDD" id="cd17016">
    <property type="entry name" value="ING_Pho23p_like"/>
    <property type="match status" value="1"/>
</dbReference>
<dbReference type="CDD" id="cd15505">
    <property type="entry name" value="PHD_ING"/>
    <property type="match status" value="1"/>
</dbReference>
<dbReference type="Gene3D" id="6.10.140.1740">
    <property type="match status" value="1"/>
</dbReference>
<dbReference type="Gene3D" id="3.30.40.10">
    <property type="entry name" value="Zinc/RING finger domain, C3HC4 (zinc finger)"/>
    <property type="match status" value="1"/>
</dbReference>
<dbReference type="InterPro" id="IPR028651">
    <property type="entry name" value="ING_fam"/>
</dbReference>
<dbReference type="InterPro" id="IPR024610">
    <property type="entry name" value="ING_N_histone-binding"/>
</dbReference>
<dbReference type="InterPro" id="IPR019786">
    <property type="entry name" value="Zinc_finger_PHD-type_CS"/>
</dbReference>
<dbReference type="InterPro" id="IPR011011">
    <property type="entry name" value="Znf_FYVE_PHD"/>
</dbReference>
<dbReference type="InterPro" id="IPR001965">
    <property type="entry name" value="Znf_PHD"/>
</dbReference>
<dbReference type="InterPro" id="IPR019787">
    <property type="entry name" value="Znf_PHD-finger"/>
</dbReference>
<dbReference type="InterPro" id="IPR013083">
    <property type="entry name" value="Znf_RING/FYVE/PHD"/>
</dbReference>
<dbReference type="PANTHER" id="PTHR10333">
    <property type="entry name" value="INHIBITOR OF GROWTH PROTEIN"/>
    <property type="match status" value="1"/>
</dbReference>
<dbReference type="PANTHER" id="PTHR10333:SF42">
    <property type="entry name" value="INHIBITOR OF GROWTH PROTEIN 5"/>
    <property type="match status" value="1"/>
</dbReference>
<dbReference type="Pfam" id="PF12998">
    <property type="entry name" value="ING"/>
    <property type="match status" value="1"/>
</dbReference>
<dbReference type="SMART" id="SM01408">
    <property type="entry name" value="ING"/>
    <property type="match status" value="1"/>
</dbReference>
<dbReference type="SMART" id="SM00249">
    <property type="entry name" value="PHD"/>
    <property type="match status" value="1"/>
</dbReference>
<dbReference type="SUPFAM" id="SSF57903">
    <property type="entry name" value="FYVE/PHD zinc finger"/>
    <property type="match status" value="1"/>
</dbReference>
<dbReference type="PROSITE" id="PS01359">
    <property type="entry name" value="ZF_PHD_1"/>
    <property type="match status" value="1"/>
</dbReference>
<dbReference type="PROSITE" id="PS50016">
    <property type="entry name" value="ZF_PHD_2"/>
    <property type="match status" value="1"/>
</dbReference>
<accession>O74736</accession>
<gene>
    <name type="primary">png2</name>
    <name type="ORF">SPBC1709.11c</name>
</gene>
<reference key="1">
    <citation type="journal article" date="2002" name="Nature">
        <title>The genome sequence of Schizosaccharomyces pombe.</title>
        <authorList>
            <person name="Wood V."/>
            <person name="Gwilliam R."/>
            <person name="Rajandream M.A."/>
            <person name="Lyne M.H."/>
            <person name="Lyne R."/>
            <person name="Stewart A."/>
            <person name="Sgouros J.G."/>
            <person name="Peat N."/>
            <person name="Hayles J."/>
            <person name="Baker S.G."/>
            <person name="Basham D."/>
            <person name="Bowman S."/>
            <person name="Brooks K."/>
            <person name="Brown D."/>
            <person name="Brown S."/>
            <person name="Chillingworth T."/>
            <person name="Churcher C.M."/>
            <person name="Collins M."/>
            <person name="Connor R."/>
            <person name="Cronin A."/>
            <person name="Davis P."/>
            <person name="Feltwell T."/>
            <person name="Fraser A."/>
            <person name="Gentles S."/>
            <person name="Goble A."/>
            <person name="Hamlin N."/>
            <person name="Harris D.E."/>
            <person name="Hidalgo J."/>
            <person name="Hodgson G."/>
            <person name="Holroyd S."/>
            <person name="Hornsby T."/>
            <person name="Howarth S."/>
            <person name="Huckle E.J."/>
            <person name="Hunt S."/>
            <person name="Jagels K."/>
            <person name="James K.D."/>
            <person name="Jones L."/>
            <person name="Jones M."/>
            <person name="Leather S."/>
            <person name="McDonald S."/>
            <person name="McLean J."/>
            <person name="Mooney P."/>
            <person name="Moule S."/>
            <person name="Mungall K.L."/>
            <person name="Murphy L.D."/>
            <person name="Niblett D."/>
            <person name="Odell C."/>
            <person name="Oliver K."/>
            <person name="O'Neil S."/>
            <person name="Pearson D."/>
            <person name="Quail M.A."/>
            <person name="Rabbinowitsch E."/>
            <person name="Rutherford K.M."/>
            <person name="Rutter S."/>
            <person name="Saunders D."/>
            <person name="Seeger K."/>
            <person name="Sharp S."/>
            <person name="Skelton J."/>
            <person name="Simmonds M.N."/>
            <person name="Squares R."/>
            <person name="Squares S."/>
            <person name="Stevens K."/>
            <person name="Taylor K."/>
            <person name="Taylor R.G."/>
            <person name="Tivey A."/>
            <person name="Walsh S.V."/>
            <person name="Warren T."/>
            <person name="Whitehead S."/>
            <person name="Woodward J.R."/>
            <person name="Volckaert G."/>
            <person name="Aert R."/>
            <person name="Robben J."/>
            <person name="Grymonprez B."/>
            <person name="Weltjens I."/>
            <person name="Vanstreels E."/>
            <person name="Rieger M."/>
            <person name="Schaefer M."/>
            <person name="Mueller-Auer S."/>
            <person name="Gabel C."/>
            <person name="Fuchs M."/>
            <person name="Duesterhoeft A."/>
            <person name="Fritzc C."/>
            <person name="Holzer E."/>
            <person name="Moestl D."/>
            <person name="Hilbert H."/>
            <person name="Borzym K."/>
            <person name="Langer I."/>
            <person name="Beck A."/>
            <person name="Lehrach H."/>
            <person name="Reinhardt R."/>
            <person name="Pohl T.M."/>
            <person name="Eger P."/>
            <person name="Zimmermann W."/>
            <person name="Wedler H."/>
            <person name="Wambutt R."/>
            <person name="Purnelle B."/>
            <person name="Goffeau A."/>
            <person name="Cadieu E."/>
            <person name="Dreano S."/>
            <person name="Gloux S."/>
            <person name="Lelaure V."/>
            <person name="Mottier S."/>
            <person name="Galibert F."/>
            <person name="Aves S.J."/>
            <person name="Xiang Z."/>
            <person name="Hunt C."/>
            <person name="Moore K."/>
            <person name="Hurst S.M."/>
            <person name="Lucas M."/>
            <person name="Rochet M."/>
            <person name="Gaillardin C."/>
            <person name="Tallada V.A."/>
            <person name="Garzon A."/>
            <person name="Thode G."/>
            <person name="Daga R.R."/>
            <person name="Cruzado L."/>
            <person name="Jimenez J."/>
            <person name="Sanchez M."/>
            <person name="del Rey F."/>
            <person name="Benito J."/>
            <person name="Dominguez A."/>
            <person name="Revuelta J.L."/>
            <person name="Moreno S."/>
            <person name="Armstrong J."/>
            <person name="Forsburg S.L."/>
            <person name="Cerutti L."/>
            <person name="Lowe T."/>
            <person name="McCombie W.R."/>
            <person name="Paulsen I."/>
            <person name="Potashkin J."/>
            <person name="Shpakovski G.V."/>
            <person name="Ussery D."/>
            <person name="Barrell B.G."/>
            <person name="Nurse P."/>
        </authorList>
    </citation>
    <scope>NUCLEOTIDE SEQUENCE [LARGE SCALE GENOMIC DNA]</scope>
    <source>
        <strain>972 / ATCC 24843</strain>
    </source>
</reference>
<reference key="2">
    <citation type="journal article" date="2000" name="Mol. Cell. Biol.">
        <title>Three yeast proteins related to the human candidate tumor suppressor p33(ING1) are associated with histone acetyltransferase activities.</title>
        <authorList>
            <person name="Loewith R."/>
            <person name="Meijer M."/>
            <person name="Lees-Miller S.P."/>
            <person name="Riabowol K."/>
            <person name="Young D."/>
        </authorList>
    </citation>
    <scope>FUNCTION</scope>
</reference>
<reference key="3">
    <citation type="journal article" date="2006" name="Nat. Biotechnol.">
        <title>ORFeome cloning and global analysis of protein localization in the fission yeast Schizosaccharomyces pombe.</title>
        <authorList>
            <person name="Matsuyama A."/>
            <person name="Arai R."/>
            <person name="Yashiroda Y."/>
            <person name="Shirai A."/>
            <person name="Kamata A."/>
            <person name="Sekido S."/>
            <person name="Kobayashi Y."/>
            <person name="Hashimoto A."/>
            <person name="Hamamoto M."/>
            <person name="Hiraoka Y."/>
            <person name="Horinouchi S."/>
            <person name="Yoshida M."/>
        </authorList>
    </citation>
    <scope>SUBCELLULAR LOCATION [LARGE SCALE ANALYSIS]</scope>
</reference>
<reference key="4">
    <citation type="journal article" date="2007" name="Nat. Struct. Mol. Biol.">
        <title>Distinct roles of HDAC complexes in promoter silencing, antisense suppression and DNA damage protection.</title>
        <authorList>
            <person name="Nicolas E."/>
            <person name="Yamada T."/>
            <person name="Cam H.P."/>
            <person name="Fitzgerald P.C."/>
            <person name="Kobayashi R."/>
            <person name="Grewal S.I.S."/>
        </authorList>
    </citation>
    <scope>IDENTIFICATION IN THE CLR6 HISTONE DEACETYLATION COMPLEX I-PRIME</scope>
    <scope>IDENTIFICATION BY MASS SPECTROMETRY</scope>
    <scope>INTERACTION WITH CLR6</scope>
    <scope>FUNCTION</scope>
</reference>
<reference key="5">
    <citation type="journal article" date="2008" name="J. Proteome Res.">
        <title>Phosphoproteome analysis of fission yeast.</title>
        <authorList>
            <person name="Wilson-Grady J.T."/>
            <person name="Villen J."/>
            <person name="Gygi S.P."/>
        </authorList>
    </citation>
    <scope>PHOSPHORYLATION [LARGE SCALE ANALYSIS] AT TYR-181; THR-183; SER-197 AND SER-198</scope>
    <scope>IDENTIFICATION BY MASS SPECTROMETRY</scope>
</reference>
<organism>
    <name type="scientific">Schizosaccharomyces pombe (strain 972 / ATCC 24843)</name>
    <name type="common">Fission yeast</name>
    <dbReference type="NCBI Taxonomy" id="284812"/>
    <lineage>
        <taxon>Eukaryota</taxon>
        <taxon>Fungi</taxon>
        <taxon>Dikarya</taxon>
        <taxon>Ascomycota</taxon>
        <taxon>Taphrinomycotina</taxon>
        <taxon>Schizosaccharomycetes</taxon>
        <taxon>Schizosaccharomycetales</taxon>
        <taxon>Schizosaccharomycetaceae</taxon>
        <taxon>Schizosaccharomyces</taxon>
    </lineage>
</organism>
<protein>
    <recommendedName>
        <fullName>Chromatin modification-related protein png2</fullName>
    </recommendedName>
    <alternativeName>
        <fullName>ING1 homolog 2</fullName>
    </alternativeName>
</protein>
<comment type="function">
    <text evidence="5 7">Component of the clr6 histone deacetylase complex I' responsible for the deacetylation of lysine residues on the N-terminal part of the core histones (H2A, H2B, H3 and H4). Histone deacetylation gives a tag for epigenetic repression and plays an important role in transcriptional regulation, cell cycle progression and developmental events. Has a role in silencing of mating type genes.</text>
</comment>
<comment type="subunit">
    <text evidence="1 7">Interacts with H3K4me3 and to a lesser extent with H3K4me2 (By similarity). Component of the clr6 histone deacetylase complex I'composed of at least clr6, png2, prw1, pst1 and sds3.</text>
</comment>
<comment type="subcellular location">
    <subcellularLocation>
        <location evidence="6">Cytoplasm</location>
    </subcellularLocation>
    <subcellularLocation>
        <location evidence="6">Nucleus</location>
    </subcellularLocation>
</comment>
<comment type="domain">
    <text evidence="1">The PHD-type zinc finger mediates the binding to H3K4me3.</text>
</comment>
<comment type="similarity">
    <text evidence="9">Belongs to the ING family.</text>
</comment>
<evidence type="ECO:0000250" key="1"/>
<evidence type="ECO:0000250" key="2">
    <source>
        <dbReference type="UniProtKB" id="Q9UK53"/>
    </source>
</evidence>
<evidence type="ECO:0000255" key="3">
    <source>
        <dbReference type="PROSITE-ProRule" id="PRU00146"/>
    </source>
</evidence>
<evidence type="ECO:0000256" key="4">
    <source>
        <dbReference type="SAM" id="MobiDB-lite"/>
    </source>
</evidence>
<evidence type="ECO:0000269" key="5">
    <source>
    </source>
</evidence>
<evidence type="ECO:0000269" key="6">
    <source>
    </source>
</evidence>
<evidence type="ECO:0000269" key="7">
    <source>
    </source>
</evidence>
<evidence type="ECO:0000269" key="8">
    <source>
    </source>
</evidence>
<evidence type="ECO:0000305" key="9"/>
<evidence type="ECO:0007829" key="10">
    <source>
        <dbReference type="PDB" id="8I03"/>
    </source>
</evidence>
<proteinExistence type="evidence at protein level"/>
<keyword id="KW-0002">3D-structure</keyword>
<keyword id="KW-0156">Chromatin regulator</keyword>
<keyword id="KW-0963">Cytoplasm</keyword>
<keyword id="KW-0479">Metal-binding</keyword>
<keyword id="KW-0539">Nucleus</keyword>
<keyword id="KW-0597">Phosphoprotein</keyword>
<keyword id="KW-1185">Reference proteome</keyword>
<keyword id="KW-0678">Repressor</keyword>
<keyword id="KW-0804">Transcription</keyword>
<keyword id="KW-0805">Transcription regulation</keyword>
<keyword id="KW-0862">Zinc</keyword>
<keyword id="KW-0863">Zinc-finger</keyword>
<name>ING2_SCHPO</name>